<gene>
    <name type="primary">ycf72-1</name>
    <name type="ordered locus">LOC_Osp1g00760</name>
</gene>
<gene>
    <name type="primary">ycf72-2</name>
</gene>
<reference key="1">
    <citation type="journal article" date="1989" name="Mol. Gen. Genet.">
        <title>The complete sequence of the rice (Oryza sativa) chloroplast genome: intermolecular recombination between distinct tRNA genes accounts for a major plastid DNA inversion during the evolution of the cereals.</title>
        <authorList>
            <person name="Hiratsuka J."/>
            <person name="Shimada H."/>
            <person name="Whittier R."/>
            <person name="Ishibashi T."/>
            <person name="Sakamoto M."/>
            <person name="Mori M."/>
            <person name="Kondo C."/>
            <person name="Honji Y."/>
            <person name="Sun C.-R."/>
            <person name="Meng B.-Y."/>
            <person name="Li Y.-Q."/>
            <person name="Kanno A."/>
            <person name="Nishizawa Y."/>
            <person name="Hirai A."/>
            <person name="Shinozaki K."/>
            <person name="Sugiura M."/>
        </authorList>
    </citation>
    <scope>NUCLEOTIDE SEQUENCE [LARGE SCALE GENOMIC DNA]</scope>
    <source>
        <strain>cv. Nipponbare</strain>
    </source>
</reference>
<reference key="2">
    <citation type="journal article" date="2004" name="Plant Physiol.">
        <title>A comparison of rice chloroplast genomes.</title>
        <authorList>
            <person name="Tang J."/>
            <person name="Xia H."/>
            <person name="Cao M."/>
            <person name="Zhang X."/>
            <person name="Zeng W."/>
            <person name="Hu S."/>
            <person name="Tong W."/>
            <person name="Wang J."/>
            <person name="Wang J."/>
            <person name="Yu J."/>
            <person name="Yang H."/>
            <person name="Zhu L."/>
        </authorList>
    </citation>
    <scope>NUCLEOTIDE SEQUENCE [LARGE SCALE GENOMIC DNA]</scope>
    <source>
        <strain>cv. Nipponbare</strain>
    </source>
</reference>
<comment type="subcellular location">
    <subcellularLocation>
        <location>Plastid</location>
        <location>Chloroplast</location>
    </subcellularLocation>
</comment>
<comment type="similarity">
    <text evidence="1">Belongs to the ycf72 family.</text>
</comment>
<sequence length="137" mass="14868">MGAFPSPPPWGWSTGFITTPLTTGRLPSQHLDPALPKLFWFTPTLPTCPTVAKQFWDTKRTSPDGNLKVADLPSFAISFATAPAALANCPPLPRVISMLCMAVPKGISVEVDSSFLSKNPFPNCTSFFQSIRLSRCI</sequence>
<accession>Q36996</accession>
<accession>O03578</accession>
<accession>O03589</accession>
<keyword id="KW-0150">Chloroplast</keyword>
<keyword id="KW-0934">Plastid</keyword>
<keyword id="KW-1185">Reference proteome</keyword>
<evidence type="ECO:0000305" key="1"/>
<geneLocation type="chloroplast"/>
<protein>
    <recommendedName>
        <fullName>Uncharacterized protein ycf72</fullName>
    </recommendedName>
    <alternativeName>
        <fullName>ORF137</fullName>
    </alternativeName>
</protein>
<name>YCF72_ORYSJ</name>
<dbReference type="EMBL" id="X15901">
    <property type="protein sequence ID" value="CAA33937.1"/>
    <property type="molecule type" value="Genomic_DNA"/>
</dbReference>
<dbReference type="EMBL" id="X15901">
    <property type="protein sequence ID" value="CAA33925.1"/>
    <property type="molecule type" value="Genomic_DNA"/>
</dbReference>
<dbReference type="EMBL" id="AY522330">
    <property type="status" value="NOT_ANNOTATED_CDS"/>
    <property type="molecule type" value="Genomic_DNA"/>
</dbReference>
<dbReference type="PIR" id="JQ0269">
    <property type="entry name" value="JQ0269"/>
</dbReference>
<dbReference type="RefSeq" id="NP_039428.1">
    <property type="nucleotide sequence ID" value="NC_001320.1"/>
</dbReference>
<dbReference type="RefSeq" id="NP_039464.1">
    <property type="nucleotide sequence ID" value="NC_001320.1"/>
</dbReference>
<dbReference type="STRING" id="39947.Q36996"/>
<dbReference type="PaxDb" id="39947-Q36996"/>
<dbReference type="KEGG" id="dosa:CAA33925.1"/>
<dbReference type="KEGG" id="dosa:CAA33937.1"/>
<dbReference type="KEGG" id="osa:3131477"/>
<dbReference type="KEGG" id="osa:3131497"/>
<dbReference type="InParanoid" id="Q36996"/>
<dbReference type="OrthoDB" id="597657at2759"/>
<dbReference type="Proteomes" id="UP000059680">
    <property type="component" value="Chloroplast"/>
</dbReference>
<dbReference type="GO" id="GO:0009507">
    <property type="term" value="C:chloroplast"/>
    <property type="evidence" value="ECO:0007669"/>
    <property type="project" value="UniProtKB-SubCell"/>
</dbReference>
<dbReference type="GO" id="GO:0009536">
    <property type="term" value="C:plastid"/>
    <property type="evidence" value="ECO:0000250"/>
    <property type="project" value="Gramene"/>
</dbReference>
<dbReference type="InterPro" id="IPR038860">
    <property type="entry name" value="YCF72"/>
</dbReference>
<dbReference type="PANTHER" id="PTHR37377">
    <property type="entry name" value="RIBULOSE BISPHOSPHATE CARBOXYLASE LARGE CHAIN"/>
    <property type="match status" value="1"/>
</dbReference>
<dbReference type="PANTHER" id="PTHR37377:SF2">
    <property type="entry name" value="SMALL RIBOSOMAL SUBUNIT PROTEIN US2C"/>
    <property type="match status" value="1"/>
</dbReference>
<feature type="chain" id="PRO_0000217405" description="Uncharacterized protein ycf72">
    <location>
        <begin position="1"/>
        <end position="137"/>
    </location>
</feature>
<organism>
    <name type="scientific">Oryza sativa subsp. japonica</name>
    <name type="common">Rice</name>
    <dbReference type="NCBI Taxonomy" id="39947"/>
    <lineage>
        <taxon>Eukaryota</taxon>
        <taxon>Viridiplantae</taxon>
        <taxon>Streptophyta</taxon>
        <taxon>Embryophyta</taxon>
        <taxon>Tracheophyta</taxon>
        <taxon>Spermatophyta</taxon>
        <taxon>Magnoliopsida</taxon>
        <taxon>Liliopsida</taxon>
        <taxon>Poales</taxon>
        <taxon>Poaceae</taxon>
        <taxon>BOP clade</taxon>
        <taxon>Oryzoideae</taxon>
        <taxon>Oryzeae</taxon>
        <taxon>Oryzinae</taxon>
        <taxon>Oryza</taxon>
        <taxon>Oryza sativa</taxon>
    </lineage>
</organism>
<proteinExistence type="inferred from homology"/>